<accession>B5Z9V0</accession>
<protein>
    <recommendedName>
        <fullName evidence="1">Elongation factor P</fullName>
        <shortName evidence="1">EF-P</shortName>
    </recommendedName>
</protein>
<proteinExistence type="inferred from homology"/>
<evidence type="ECO:0000255" key="1">
    <source>
        <dbReference type="HAMAP-Rule" id="MF_00141"/>
    </source>
</evidence>
<sequence>MAIGMSELKKGLKIELGGVPYRIVEYQHVKPGKGAAFVRAKIKSFLDGKVIEKTFHAGDKCEEPNLVEKTMQYLYHDGDTYQFMDIESYEQIALNDSQVGEASKWMLDGMQVQVLLHNDKAISVDVPQVVALKIVETAPNFKGDTSSASKKPATLETGAVVQVPFHVLEGEIIKVNTETEEYLEKVK</sequence>
<comment type="function">
    <text evidence="1">Involved in peptide bond synthesis. Stimulates efficient translation and peptide-bond synthesis on native or reconstituted 70S ribosomes in vitro. Probably functions indirectly by altering the affinity of the ribosome for aminoacyl-tRNA, thus increasing their reactivity as acceptors for peptidyl transferase.</text>
</comment>
<comment type="pathway">
    <text evidence="1">Protein biosynthesis; polypeptide chain elongation.</text>
</comment>
<comment type="subcellular location">
    <subcellularLocation>
        <location evidence="1">Cytoplasm</location>
    </subcellularLocation>
</comment>
<comment type="similarity">
    <text evidence="1">Belongs to the elongation factor P family.</text>
</comment>
<keyword id="KW-0963">Cytoplasm</keyword>
<keyword id="KW-0251">Elongation factor</keyword>
<keyword id="KW-0648">Protein biosynthesis</keyword>
<keyword id="KW-1185">Reference proteome</keyword>
<dbReference type="EMBL" id="CP001173">
    <property type="protein sequence ID" value="ACI26930.1"/>
    <property type="molecule type" value="Genomic_DNA"/>
</dbReference>
<dbReference type="RefSeq" id="WP_000974265.1">
    <property type="nucleotide sequence ID" value="NC_011333.1"/>
</dbReference>
<dbReference type="SMR" id="B5Z9V0"/>
<dbReference type="GeneID" id="93236545"/>
<dbReference type="KEGG" id="hpg:HPG27_162"/>
<dbReference type="HOGENOM" id="CLU_074944_0_1_7"/>
<dbReference type="UniPathway" id="UPA00345"/>
<dbReference type="Proteomes" id="UP000001735">
    <property type="component" value="Chromosome"/>
</dbReference>
<dbReference type="GO" id="GO:0005737">
    <property type="term" value="C:cytoplasm"/>
    <property type="evidence" value="ECO:0007669"/>
    <property type="project" value="UniProtKB-SubCell"/>
</dbReference>
<dbReference type="GO" id="GO:0003746">
    <property type="term" value="F:translation elongation factor activity"/>
    <property type="evidence" value="ECO:0007669"/>
    <property type="project" value="UniProtKB-UniRule"/>
</dbReference>
<dbReference type="GO" id="GO:0043043">
    <property type="term" value="P:peptide biosynthetic process"/>
    <property type="evidence" value="ECO:0007669"/>
    <property type="project" value="InterPro"/>
</dbReference>
<dbReference type="CDD" id="cd04470">
    <property type="entry name" value="S1_EF-P_repeat_1"/>
    <property type="match status" value="1"/>
</dbReference>
<dbReference type="CDD" id="cd05794">
    <property type="entry name" value="S1_EF-P_repeat_2"/>
    <property type="match status" value="1"/>
</dbReference>
<dbReference type="FunFam" id="2.30.30.30:FF:000003">
    <property type="entry name" value="Elongation factor P"/>
    <property type="match status" value="1"/>
</dbReference>
<dbReference type="FunFam" id="2.40.50.140:FF:000004">
    <property type="entry name" value="Elongation factor P"/>
    <property type="match status" value="1"/>
</dbReference>
<dbReference type="FunFam" id="2.40.50.140:FF:000009">
    <property type="entry name" value="Elongation factor P"/>
    <property type="match status" value="1"/>
</dbReference>
<dbReference type="Gene3D" id="2.30.30.30">
    <property type="match status" value="1"/>
</dbReference>
<dbReference type="Gene3D" id="2.40.50.140">
    <property type="entry name" value="Nucleic acid-binding proteins"/>
    <property type="match status" value="2"/>
</dbReference>
<dbReference type="HAMAP" id="MF_00141">
    <property type="entry name" value="EF_P"/>
    <property type="match status" value="1"/>
</dbReference>
<dbReference type="InterPro" id="IPR015365">
    <property type="entry name" value="Elong-fact-P_C"/>
</dbReference>
<dbReference type="InterPro" id="IPR012340">
    <property type="entry name" value="NA-bd_OB-fold"/>
</dbReference>
<dbReference type="InterPro" id="IPR014722">
    <property type="entry name" value="Rib_uL2_dom2"/>
</dbReference>
<dbReference type="InterPro" id="IPR020599">
    <property type="entry name" value="Transl_elong_fac_P/YeiP"/>
</dbReference>
<dbReference type="InterPro" id="IPR013185">
    <property type="entry name" value="Transl_elong_KOW-like"/>
</dbReference>
<dbReference type="InterPro" id="IPR001059">
    <property type="entry name" value="Transl_elong_P/YeiP_cen"/>
</dbReference>
<dbReference type="InterPro" id="IPR013852">
    <property type="entry name" value="Transl_elong_P/YeiP_CS"/>
</dbReference>
<dbReference type="InterPro" id="IPR011768">
    <property type="entry name" value="Transl_elongation_fac_P"/>
</dbReference>
<dbReference type="InterPro" id="IPR008991">
    <property type="entry name" value="Translation_prot_SH3-like_sf"/>
</dbReference>
<dbReference type="NCBIfam" id="TIGR00038">
    <property type="entry name" value="efp"/>
    <property type="match status" value="1"/>
</dbReference>
<dbReference type="NCBIfam" id="NF001810">
    <property type="entry name" value="PRK00529.1"/>
    <property type="match status" value="1"/>
</dbReference>
<dbReference type="PANTHER" id="PTHR30053">
    <property type="entry name" value="ELONGATION FACTOR P"/>
    <property type="match status" value="1"/>
</dbReference>
<dbReference type="PANTHER" id="PTHR30053:SF12">
    <property type="entry name" value="ELONGATION FACTOR P (EF-P) FAMILY PROTEIN"/>
    <property type="match status" value="1"/>
</dbReference>
<dbReference type="Pfam" id="PF01132">
    <property type="entry name" value="EFP"/>
    <property type="match status" value="1"/>
</dbReference>
<dbReference type="Pfam" id="PF08207">
    <property type="entry name" value="EFP_N"/>
    <property type="match status" value="1"/>
</dbReference>
<dbReference type="Pfam" id="PF09285">
    <property type="entry name" value="Elong-fact-P_C"/>
    <property type="match status" value="1"/>
</dbReference>
<dbReference type="PIRSF" id="PIRSF005901">
    <property type="entry name" value="EF-P"/>
    <property type="match status" value="1"/>
</dbReference>
<dbReference type="SMART" id="SM01185">
    <property type="entry name" value="EFP"/>
    <property type="match status" value="1"/>
</dbReference>
<dbReference type="SMART" id="SM00841">
    <property type="entry name" value="Elong-fact-P_C"/>
    <property type="match status" value="1"/>
</dbReference>
<dbReference type="SUPFAM" id="SSF50249">
    <property type="entry name" value="Nucleic acid-binding proteins"/>
    <property type="match status" value="2"/>
</dbReference>
<dbReference type="SUPFAM" id="SSF50104">
    <property type="entry name" value="Translation proteins SH3-like domain"/>
    <property type="match status" value="1"/>
</dbReference>
<dbReference type="PROSITE" id="PS01275">
    <property type="entry name" value="EFP"/>
    <property type="match status" value="1"/>
</dbReference>
<feature type="chain" id="PRO_1000096161" description="Elongation factor P">
    <location>
        <begin position="1"/>
        <end position="187"/>
    </location>
</feature>
<name>EFP_HELPG</name>
<reference key="1">
    <citation type="journal article" date="2009" name="J. Bacteriol.">
        <title>The complete genome sequence of Helicobacter pylori strain G27.</title>
        <authorList>
            <person name="Baltrus D.A."/>
            <person name="Amieva M.R."/>
            <person name="Covacci A."/>
            <person name="Lowe T.M."/>
            <person name="Merrell D.S."/>
            <person name="Ottemann K.M."/>
            <person name="Stein M."/>
            <person name="Salama N.R."/>
            <person name="Guillemin K."/>
        </authorList>
    </citation>
    <scope>NUCLEOTIDE SEQUENCE [LARGE SCALE GENOMIC DNA]</scope>
    <source>
        <strain>G27</strain>
    </source>
</reference>
<gene>
    <name evidence="1" type="primary">efp</name>
    <name type="ordered locus">HPG27_162</name>
</gene>
<organism>
    <name type="scientific">Helicobacter pylori (strain G27)</name>
    <dbReference type="NCBI Taxonomy" id="563041"/>
    <lineage>
        <taxon>Bacteria</taxon>
        <taxon>Pseudomonadati</taxon>
        <taxon>Campylobacterota</taxon>
        <taxon>Epsilonproteobacteria</taxon>
        <taxon>Campylobacterales</taxon>
        <taxon>Helicobacteraceae</taxon>
        <taxon>Helicobacter</taxon>
    </lineage>
</organism>